<name>IFNA1_MOUSE</name>
<sequence>MARLCAFLMVLAVLSYWPTCSLGCDLPQTHNLRNKRALTLLVQMRRLSPLSCLKDRKDFGFPQEKVDAQQIKKAQAIPVLSELTQQILNIFTSKDSSAAWNTTLLDSFCNDLHQQLNDLQGCLMQQVGVQEFPLTQEDALLAVRKYFHRITVYLREKKHSPCAWEVVRAEVWRALSSSANVLGRLREEK</sequence>
<organism>
    <name type="scientific">Mus musculus</name>
    <name type="common">Mouse</name>
    <dbReference type="NCBI Taxonomy" id="10090"/>
    <lineage>
        <taxon>Eukaryota</taxon>
        <taxon>Metazoa</taxon>
        <taxon>Chordata</taxon>
        <taxon>Craniata</taxon>
        <taxon>Vertebrata</taxon>
        <taxon>Euteleostomi</taxon>
        <taxon>Mammalia</taxon>
        <taxon>Eutheria</taxon>
        <taxon>Euarchontoglires</taxon>
        <taxon>Glires</taxon>
        <taxon>Rodentia</taxon>
        <taxon>Myomorpha</taxon>
        <taxon>Muroidea</taxon>
        <taxon>Muridae</taxon>
        <taxon>Murinae</taxon>
        <taxon>Mus</taxon>
        <taxon>Mus</taxon>
    </lineage>
</organism>
<accession>P01572</accession>
<accession>Q7M0A3</accession>
<accession>Q810G7</accession>
<proteinExistence type="evidence at protein level"/>
<keyword id="KW-0051">Antiviral defense</keyword>
<keyword id="KW-0202">Cytokine</keyword>
<keyword id="KW-0903">Direct protein sequencing</keyword>
<keyword id="KW-1015">Disulfide bond</keyword>
<keyword id="KW-0325">Glycoprotein</keyword>
<keyword id="KW-1185">Reference proteome</keyword>
<keyword id="KW-0964">Secreted</keyword>
<keyword id="KW-0732">Signal</keyword>
<protein>
    <recommendedName>
        <fullName>Interferon alpha-1</fullName>
        <shortName>IFN-alpha-1</shortName>
    </recommendedName>
</protein>
<comment type="function">
    <text evidence="3">Produced by macrophages, IFN-alpha have antiviral activities. Interferon stimulates the production of two enzymes: a protein kinase and an oligoadenylate synthetase.</text>
</comment>
<comment type="subunit">
    <text evidence="2">Interacts with CR2.</text>
</comment>
<comment type="subcellular location">
    <subcellularLocation>
        <location>Secreted</location>
    </subcellularLocation>
</comment>
<comment type="PTM">
    <text evidence="3">Glycosylated.</text>
</comment>
<comment type="similarity">
    <text evidence="5">Belongs to the alpha/beta interferon family.</text>
</comment>
<comment type="caution">
    <text evidence="7">Was named interferon alpha-E (embryonic) based on peptide sequencing (PubMed:9244179). The differences found may be sequencing erros and have not been confirmed by other studies.</text>
</comment>
<dbReference type="EMBL" id="X01974">
    <property type="protein sequence ID" value="CAA26006.1"/>
    <property type="molecule type" value="Genomic_DNA"/>
</dbReference>
<dbReference type="EMBL" id="AY225950">
    <property type="protein sequence ID" value="AAO63592.1"/>
    <property type="molecule type" value="Genomic_DNA"/>
</dbReference>
<dbReference type="EMBL" id="BX530016">
    <property type="status" value="NOT_ANNOTATED_CDS"/>
    <property type="molecule type" value="Genomic_DNA"/>
</dbReference>
<dbReference type="EMBL" id="CH466527">
    <property type="protein sequence ID" value="EDL30958.1"/>
    <property type="molecule type" value="Genomic_DNA"/>
</dbReference>
<dbReference type="CCDS" id="CCDS18347.1"/>
<dbReference type="PIR" id="A01836">
    <property type="entry name" value="IVMSA1"/>
</dbReference>
<dbReference type="PIR" id="S62682">
    <property type="entry name" value="S62682"/>
</dbReference>
<dbReference type="RefSeq" id="NP_034632.2">
    <property type="nucleotide sequence ID" value="NM_010502.2"/>
</dbReference>
<dbReference type="SMR" id="P01572"/>
<dbReference type="FunCoup" id="P01572">
    <property type="interactions" value="1162"/>
</dbReference>
<dbReference type="STRING" id="10090.ENSMUSP00000092580"/>
<dbReference type="GlyCosmos" id="P01572">
    <property type="glycosylation" value="1 site, No reported glycans"/>
</dbReference>
<dbReference type="GlyGen" id="P01572">
    <property type="glycosylation" value="1 site"/>
</dbReference>
<dbReference type="iPTMnet" id="P01572"/>
<dbReference type="PhosphoSitePlus" id="P01572"/>
<dbReference type="PaxDb" id="10090-ENSMUSP00000092580"/>
<dbReference type="ABCD" id="P01572">
    <property type="antibodies" value="1 sequenced antibody"/>
</dbReference>
<dbReference type="DNASU" id="15962"/>
<dbReference type="Ensembl" id="ENSMUST00000094972.2">
    <property type="protein sequence ID" value="ENSMUSP00000092580.2"/>
    <property type="gene ID" value="ENSMUSG00000095498.2"/>
</dbReference>
<dbReference type="GeneID" id="15962"/>
<dbReference type="KEGG" id="mmu:15962"/>
<dbReference type="UCSC" id="uc008toc.1">
    <property type="organism name" value="mouse"/>
</dbReference>
<dbReference type="AGR" id="MGI:107668"/>
<dbReference type="CTD" id="3439"/>
<dbReference type="MGI" id="MGI:107668">
    <property type="gene designation" value="Ifna1"/>
</dbReference>
<dbReference type="VEuPathDB" id="HostDB:ENSMUSG00000095498"/>
<dbReference type="eggNOG" id="ENOG502SQAC">
    <property type="taxonomic scope" value="Eukaryota"/>
</dbReference>
<dbReference type="GeneTree" id="ENSGT01000000214430"/>
<dbReference type="HOGENOM" id="CLU_109427_0_0_1"/>
<dbReference type="InParanoid" id="P01572"/>
<dbReference type="OMA" id="MIMAQMG"/>
<dbReference type="OrthoDB" id="9529410at2759"/>
<dbReference type="PhylomeDB" id="P01572"/>
<dbReference type="TreeFam" id="TF336177"/>
<dbReference type="Reactome" id="R-MMU-909733">
    <property type="pathway name" value="Interferon alpha/beta signaling"/>
</dbReference>
<dbReference type="Reactome" id="R-MMU-912694">
    <property type="pathway name" value="Regulation of IFNA/IFNB signaling"/>
</dbReference>
<dbReference type="SABIO-RK" id="P01572"/>
<dbReference type="BioGRID-ORCS" id="15962">
    <property type="hits" value="9 hits in 43 CRISPR screens"/>
</dbReference>
<dbReference type="PRO" id="PR:P01572"/>
<dbReference type="Proteomes" id="UP000000589">
    <property type="component" value="Chromosome 4"/>
</dbReference>
<dbReference type="RNAct" id="P01572">
    <property type="molecule type" value="protein"/>
</dbReference>
<dbReference type="GO" id="GO:0005576">
    <property type="term" value="C:extracellular region"/>
    <property type="evidence" value="ECO:0000304"/>
    <property type="project" value="Reactome"/>
</dbReference>
<dbReference type="GO" id="GO:0005615">
    <property type="term" value="C:extracellular space"/>
    <property type="evidence" value="ECO:0000314"/>
    <property type="project" value="CAFA"/>
</dbReference>
<dbReference type="GO" id="GO:0005125">
    <property type="term" value="F:cytokine activity"/>
    <property type="evidence" value="ECO:0000314"/>
    <property type="project" value="MGI"/>
</dbReference>
<dbReference type="GO" id="GO:0005126">
    <property type="term" value="F:cytokine receptor binding"/>
    <property type="evidence" value="ECO:0007669"/>
    <property type="project" value="InterPro"/>
</dbReference>
<dbReference type="GO" id="GO:0042742">
    <property type="term" value="P:defense response to bacterium"/>
    <property type="evidence" value="ECO:0000314"/>
    <property type="project" value="MGI"/>
</dbReference>
<dbReference type="GO" id="GO:0051607">
    <property type="term" value="P:defense response to virus"/>
    <property type="evidence" value="ECO:0000314"/>
    <property type="project" value="MGI"/>
</dbReference>
<dbReference type="GO" id="GO:0002323">
    <property type="term" value="P:natural killer cell activation involved in immune response"/>
    <property type="evidence" value="ECO:0000314"/>
    <property type="project" value="MGI"/>
</dbReference>
<dbReference type="GO" id="GO:0050691">
    <property type="term" value="P:regulation of defense response to virus by host"/>
    <property type="evidence" value="ECO:0000314"/>
    <property type="project" value="CAFA"/>
</dbReference>
<dbReference type="GO" id="GO:0002286">
    <property type="term" value="P:T cell activation involved in immune response"/>
    <property type="evidence" value="ECO:0000314"/>
    <property type="project" value="MGI"/>
</dbReference>
<dbReference type="GO" id="GO:0060337">
    <property type="term" value="P:type I interferon-mediated signaling pathway"/>
    <property type="evidence" value="ECO:0000314"/>
    <property type="project" value="CAFA"/>
</dbReference>
<dbReference type="CDD" id="cd00095">
    <property type="entry name" value="IFab"/>
    <property type="match status" value="1"/>
</dbReference>
<dbReference type="FunFam" id="1.20.1250.10:FF:000001">
    <property type="entry name" value="Interferon alpha"/>
    <property type="match status" value="1"/>
</dbReference>
<dbReference type="Gene3D" id="1.20.1250.10">
    <property type="match status" value="1"/>
</dbReference>
<dbReference type="InterPro" id="IPR009079">
    <property type="entry name" value="4_helix_cytokine-like_core"/>
</dbReference>
<dbReference type="InterPro" id="IPR000471">
    <property type="entry name" value="Interferon_alpha/beta/delta"/>
</dbReference>
<dbReference type="PANTHER" id="PTHR11691:SF74">
    <property type="entry name" value="ALPHA-INTERFERON-RELATED"/>
    <property type="match status" value="1"/>
</dbReference>
<dbReference type="PANTHER" id="PTHR11691">
    <property type="entry name" value="TYPE I INTERFERON"/>
    <property type="match status" value="1"/>
</dbReference>
<dbReference type="Pfam" id="PF00143">
    <property type="entry name" value="Interferon"/>
    <property type="match status" value="1"/>
</dbReference>
<dbReference type="PRINTS" id="PR00266">
    <property type="entry name" value="INTERFERONAB"/>
</dbReference>
<dbReference type="SMART" id="SM00076">
    <property type="entry name" value="IFabd"/>
    <property type="match status" value="1"/>
</dbReference>
<dbReference type="SUPFAM" id="SSF47266">
    <property type="entry name" value="4-helical cytokines"/>
    <property type="match status" value="1"/>
</dbReference>
<dbReference type="PROSITE" id="PS00252">
    <property type="entry name" value="INTERFERON_A_B_D"/>
    <property type="match status" value="1"/>
</dbReference>
<evidence type="ECO:0000250" key="1"/>
<evidence type="ECO:0000250" key="2">
    <source>
        <dbReference type="UniProtKB" id="P01562"/>
    </source>
</evidence>
<evidence type="ECO:0000269" key="3">
    <source>
    </source>
</evidence>
<evidence type="ECO:0000269" key="4">
    <source>
    </source>
</evidence>
<evidence type="ECO:0000305" key="5"/>
<evidence type="ECO:0000305" key="6">
    <source>
    </source>
</evidence>
<evidence type="ECO:0000305" key="7">
    <source>
    </source>
</evidence>
<gene>
    <name type="primary">Ifna1</name>
</gene>
<reference key="1">
    <citation type="journal article" date="1983" name="Nucleic Acids Res.">
        <title>Structure and expression of cloned murine IFN-alpha genes.</title>
        <authorList>
            <person name="Shaw G.D."/>
            <person name="Boll W."/>
            <person name="Taira H."/>
            <person name="Mantei N."/>
            <person name="Lengyel P."/>
            <person name="Weissmann C."/>
        </authorList>
    </citation>
    <scope>NUCLEOTIDE SEQUENCE [GENOMIC DNA]</scope>
</reference>
<reference key="2">
    <citation type="journal article" date="1985" name="Nucleic Acids Res.">
        <title>Characterization of a mouse interferon gene locus I. Isolation of a cluster of four alpha interferon genes.</title>
        <authorList>
            <person name="Kelly K.A."/>
            <person name="Pitha P.M."/>
        </authorList>
    </citation>
    <scope>NUCLEOTIDE SEQUENCE [GENOMIC DNA]</scope>
</reference>
<reference key="3">
    <citation type="journal article" date="2004" name="J. Virol.">
        <title>Characterization of the murine alpha interferon gene family.</title>
        <authorList>
            <person name="van Pesch V."/>
            <person name="Lanaya H."/>
            <person name="Renauld J.C."/>
            <person name="Michiels T."/>
        </authorList>
    </citation>
    <scope>NUCLEOTIDE SEQUENCE [GENOMIC DNA]</scope>
    <scope>FUNCTION</scope>
    <scope>GLYCOSYLATION</scope>
    <source>
        <strain>C57BL/6J</strain>
    </source>
</reference>
<reference key="4">
    <citation type="journal article" date="2009" name="PLoS Biol.">
        <title>Lineage-specific biology revealed by a finished genome assembly of the mouse.</title>
        <authorList>
            <person name="Church D.M."/>
            <person name="Goodstadt L."/>
            <person name="Hillier L.W."/>
            <person name="Zody M.C."/>
            <person name="Goldstein S."/>
            <person name="She X."/>
            <person name="Bult C.J."/>
            <person name="Agarwala R."/>
            <person name="Cherry J.L."/>
            <person name="DiCuccio M."/>
            <person name="Hlavina W."/>
            <person name="Kapustin Y."/>
            <person name="Meric P."/>
            <person name="Maglott D."/>
            <person name="Birtle Z."/>
            <person name="Marques A.C."/>
            <person name="Graves T."/>
            <person name="Zhou S."/>
            <person name="Teague B."/>
            <person name="Potamousis K."/>
            <person name="Churas C."/>
            <person name="Place M."/>
            <person name="Herschleb J."/>
            <person name="Runnheim R."/>
            <person name="Forrest D."/>
            <person name="Amos-Landgraf J."/>
            <person name="Schwartz D.C."/>
            <person name="Cheng Z."/>
            <person name="Lindblad-Toh K."/>
            <person name="Eichler E.E."/>
            <person name="Ponting C.P."/>
        </authorList>
    </citation>
    <scope>NUCLEOTIDE SEQUENCE [LARGE SCALE GENOMIC DNA]</scope>
    <source>
        <strain>C57BL/6J</strain>
    </source>
</reference>
<reference key="5">
    <citation type="submission" date="2005-09" db="EMBL/GenBank/DDBJ databases">
        <authorList>
            <person name="Mural R.J."/>
            <person name="Adams M.D."/>
            <person name="Myers E.W."/>
            <person name="Smith H.O."/>
            <person name="Venter J.C."/>
        </authorList>
    </citation>
    <scope>NUCLEOTIDE SEQUENCE [LARGE SCALE GENOMIC DNA]</scope>
</reference>
<reference key="6">
    <citation type="journal article" date="1996" name="Biochim. Biophys. Acta">
        <title>Characterisation and antiproliferative activity of an alpha-type murine interferon from embryonic fibroblasts.</title>
        <authorList>
            <person name="Beare D."/>
            <person name="Learmonth M."/>
            <person name="Wells V."/>
            <person name="Aitken A."/>
            <person name="Mallucci L."/>
        </authorList>
    </citation>
    <scope>PROTEIN SEQUENCE OF 24-51; 124-146 AND 175-181</scope>
</reference>
<feature type="signal peptide" evidence="4">
    <location>
        <begin position="1"/>
        <end position="23"/>
    </location>
</feature>
<feature type="chain" id="PRO_0000016375" description="Interferon alpha-1">
    <location>
        <begin position="24"/>
        <end position="189"/>
    </location>
</feature>
<feature type="glycosylation site" description="N-linked (GlcNAc...) asparagine" evidence="6">
    <location>
        <position position="101"/>
    </location>
</feature>
<feature type="disulfide bond" evidence="1">
    <location>
        <begin position="24"/>
        <end position="122"/>
    </location>
</feature>
<feature type="disulfide bond" evidence="1">
    <location>
        <begin position="52"/>
        <end position="162"/>
    </location>
</feature>
<feature type="sequence conflict" description="In Ref. 1; no nucleotide entry and 2; CAA26006." evidence="5" ref="1 2">
    <original>L</original>
    <variation>M</variation>
    <location>
        <position position="14"/>
    </location>
</feature>
<feature type="sequence conflict" description="In Ref. 1; no nucleotide entry and 2; CAA26006." evidence="5" ref="1 2">
    <original>T</original>
    <variation>A</variation>
    <location>
        <position position="102"/>
    </location>
</feature>
<feature type="sequence conflict" description="In Ref. 6; AA sequence." evidence="5" ref="6">
    <original>Q</original>
    <variation>E</variation>
    <location>
        <position position="126"/>
    </location>
</feature>
<feature type="sequence conflict" description="In Ref. 6; AA sequence." evidence="5" ref="6">
    <original>F</original>
    <variation>P</variation>
    <location>
        <position position="132"/>
    </location>
</feature>
<feature type="sequence conflict" description="In Ref. 6; AA sequence." evidence="5" ref="6">
    <original>A</original>
    <variation>Y</variation>
    <location>
        <position position="139"/>
    </location>
</feature>
<feature type="sequence conflict" description="In Ref. 6; AA sequence." evidence="5" ref="6">
    <original>K</original>
    <variation>T</variation>
    <location>
        <position position="145"/>
    </location>
</feature>
<feature type="sequence conflict" description="In Ref. 6; AA sequence." evidence="5" ref="6">
    <original>L</original>
    <variation>M</variation>
    <location>
        <position position="175"/>
    </location>
</feature>
<feature type="sequence conflict" description="In Ref. 6; AA sequence." evidence="5" ref="6">
    <original>NV</original>
    <variation>KL</variation>
    <location>
        <begin position="180"/>
        <end position="181"/>
    </location>
</feature>